<evidence type="ECO:0000255" key="1">
    <source>
        <dbReference type="HAMAP-Rule" id="MF_01448"/>
    </source>
</evidence>
<accession>B8DE09</accession>
<comment type="similarity">
    <text evidence="1">Belongs to the UPF0473 family.</text>
</comment>
<name>Y1068_LISMH</name>
<gene>
    <name type="ordered locus">LMHCC_1068</name>
</gene>
<organism>
    <name type="scientific">Listeria monocytogenes serotype 4a (strain HCC23)</name>
    <dbReference type="NCBI Taxonomy" id="552536"/>
    <lineage>
        <taxon>Bacteria</taxon>
        <taxon>Bacillati</taxon>
        <taxon>Bacillota</taxon>
        <taxon>Bacilli</taxon>
        <taxon>Bacillales</taxon>
        <taxon>Listeriaceae</taxon>
        <taxon>Listeria</taxon>
    </lineage>
</organism>
<feature type="chain" id="PRO_1000184997" description="UPF0473 protein LMHCC_1068">
    <location>
        <begin position="1"/>
        <end position="100"/>
    </location>
</feature>
<reference key="1">
    <citation type="journal article" date="2011" name="J. Bacteriol.">
        <title>Genome sequence of lineage III Listeria monocytogenes strain HCC23.</title>
        <authorList>
            <person name="Steele C.L."/>
            <person name="Donaldson J.R."/>
            <person name="Paul D."/>
            <person name="Banes M.M."/>
            <person name="Arick T."/>
            <person name="Bridges S.M."/>
            <person name="Lawrence M.L."/>
        </authorList>
    </citation>
    <scope>NUCLEOTIDE SEQUENCE [LARGE SCALE GENOMIC DNA]</scope>
    <source>
        <strain>HCC23</strain>
    </source>
</reference>
<sequence length="100" mass="11766">MAEEHNHNHEEENIIWITNEEGKEEAYEILFDFDSKDFDKSYVLYFPAGKGEDEEIEILASSYIQDEEGKQGQLKPVETDEEWDMIEEILATFLADEDEE</sequence>
<dbReference type="EMBL" id="CP001175">
    <property type="protein sequence ID" value="ACK39416.1"/>
    <property type="molecule type" value="Genomic_DNA"/>
</dbReference>
<dbReference type="RefSeq" id="WP_012581291.1">
    <property type="nucleotide sequence ID" value="NC_011660.1"/>
</dbReference>
<dbReference type="KEGG" id="lmh:LMHCC_1068"/>
<dbReference type="HOGENOM" id="CLU_146610_2_1_9"/>
<dbReference type="HAMAP" id="MF_01448">
    <property type="entry name" value="UPF0473"/>
    <property type="match status" value="1"/>
</dbReference>
<dbReference type="InterPro" id="IPR009711">
    <property type="entry name" value="UPF0473"/>
</dbReference>
<dbReference type="NCBIfam" id="NF010217">
    <property type="entry name" value="PRK13678.1-4"/>
    <property type="match status" value="1"/>
</dbReference>
<dbReference type="PANTHER" id="PTHR40066">
    <property type="entry name" value="UPF0473 PROTEIN CBO2561/CLC_2432"/>
    <property type="match status" value="1"/>
</dbReference>
<dbReference type="PANTHER" id="PTHR40066:SF1">
    <property type="entry name" value="UPF0473 PROTEIN CBO2561_CLC_2432"/>
    <property type="match status" value="1"/>
</dbReference>
<dbReference type="Pfam" id="PF06949">
    <property type="entry name" value="DUF1292"/>
    <property type="match status" value="1"/>
</dbReference>
<proteinExistence type="inferred from homology"/>
<protein>
    <recommendedName>
        <fullName evidence="1">UPF0473 protein LMHCC_1068</fullName>
    </recommendedName>
</protein>